<dbReference type="EC" id="2.5.1.78" evidence="1"/>
<dbReference type="EMBL" id="CP001050">
    <property type="protein sequence ID" value="ACF29085.1"/>
    <property type="molecule type" value="Genomic_DNA"/>
</dbReference>
<dbReference type="RefSeq" id="WP_003687601.1">
    <property type="nucleotide sequence ID" value="NC_011035.1"/>
</dbReference>
<dbReference type="SMR" id="B4RJT4"/>
<dbReference type="GeneID" id="66752592"/>
<dbReference type="KEGG" id="ngk:NGK_0394"/>
<dbReference type="HOGENOM" id="CLU_089358_1_2_4"/>
<dbReference type="UniPathway" id="UPA00275">
    <property type="reaction ID" value="UER00404"/>
</dbReference>
<dbReference type="Proteomes" id="UP000002564">
    <property type="component" value="Chromosome"/>
</dbReference>
<dbReference type="GO" id="GO:0005829">
    <property type="term" value="C:cytosol"/>
    <property type="evidence" value="ECO:0007669"/>
    <property type="project" value="TreeGrafter"/>
</dbReference>
<dbReference type="GO" id="GO:0009349">
    <property type="term" value="C:riboflavin synthase complex"/>
    <property type="evidence" value="ECO:0007669"/>
    <property type="project" value="InterPro"/>
</dbReference>
<dbReference type="GO" id="GO:0000906">
    <property type="term" value="F:6,7-dimethyl-8-ribityllumazine synthase activity"/>
    <property type="evidence" value="ECO:0007669"/>
    <property type="project" value="UniProtKB-UniRule"/>
</dbReference>
<dbReference type="GO" id="GO:0009231">
    <property type="term" value="P:riboflavin biosynthetic process"/>
    <property type="evidence" value="ECO:0007669"/>
    <property type="project" value="UniProtKB-UniRule"/>
</dbReference>
<dbReference type="CDD" id="cd09209">
    <property type="entry name" value="Lumazine_synthase-I"/>
    <property type="match status" value="1"/>
</dbReference>
<dbReference type="Gene3D" id="3.40.50.960">
    <property type="entry name" value="Lumazine/riboflavin synthase"/>
    <property type="match status" value="1"/>
</dbReference>
<dbReference type="HAMAP" id="MF_00178">
    <property type="entry name" value="Lumazine_synth"/>
    <property type="match status" value="1"/>
</dbReference>
<dbReference type="InterPro" id="IPR034964">
    <property type="entry name" value="LS"/>
</dbReference>
<dbReference type="InterPro" id="IPR002180">
    <property type="entry name" value="LS/RS"/>
</dbReference>
<dbReference type="InterPro" id="IPR036467">
    <property type="entry name" value="LS/RS_sf"/>
</dbReference>
<dbReference type="NCBIfam" id="TIGR00114">
    <property type="entry name" value="lumazine-synth"/>
    <property type="match status" value="1"/>
</dbReference>
<dbReference type="PANTHER" id="PTHR21058:SF0">
    <property type="entry name" value="6,7-DIMETHYL-8-RIBITYLLUMAZINE SYNTHASE"/>
    <property type="match status" value="1"/>
</dbReference>
<dbReference type="PANTHER" id="PTHR21058">
    <property type="entry name" value="6,7-DIMETHYL-8-RIBITYLLUMAZINE SYNTHASE DMRL SYNTHASE LUMAZINE SYNTHASE"/>
    <property type="match status" value="1"/>
</dbReference>
<dbReference type="Pfam" id="PF00885">
    <property type="entry name" value="DMRL_synthase"/>
    <property type="match status" value="1"/>
</dbReference>
<dbReference type="SUPFAM" id="SSF52121">
    <property type="entry name" value="Lumazine synthase"/>
    <property type="match status" value="1"/>
</dbReference>
<protein>
    <recommendedName>
        <fullName evidence="1">6,7-dimethyl-8-ribityllumazine synthase</fullName>
        <shortName evidence="1">DMRL synthase</shortName>
        <shortName evidence="1">LS</shortName>
        <shortName evidence="1">Lumazine synthase</shortName>
        <ecNumber evidence="1">2.5.1.78</ecNumber>
    </recommendedName>
</protein>
<accession>B4RJT4</accession>
<feature type="chain" id="PRO_1000098210" description="6,7-dimethyl-8-ribityllumazine synthase">
    <location>
        <begin position="1"/>
        <end position="158"/>
    </location>
</feature>
<feature type="active site" description="Proton donor" evidence="1">
    <location>
        <position position="88"/>
    </location>
</feature>
<feature type="binding site" evidence="1">
    <location>
        <position position="22"/>
    </location>
    <ligand>
        <name>5-amino-6-(D-ribitylamino)uracil</name>
        <dbReference type="ChEBI" id="CHEBI:15934"/>
    </ligand>
</feature>
<feature type="binding site" evidence="1">
    <location>
        <begin position="56"/>
        <end position="58"/>
    </location>
    <ligand>
        <name>5-amino-6-(D-ribitylamino)uracil</name>
        <dbReference type="ChEBI" id="CHEBI:15934"/>
    </ligand>
</feature>
<feature type="binding site" evidence="1">
    <location>
        <begin position="80"/>
        <end position="82"/>
    </location>
    <ligand>
        <name>5-amino-6-(D-ribitylamino)uracil</name>
        <dbReference type="ChEBI" id="CHEBI:15934"/>
    </ligand>
</feature>
<feature type="binding site" evidence="1">
    <location>
        <begin position="85"/>
        <end position="86"/>
    </location>
    <ligand>
        <name>(2S)-2-hydroxy-3-oxobutyl phosphate</name>
        <dbReference type="ChEBI" id="CHEBI:58830"/>
    </ligand>
</feature>
<feature type="binding site" evidence="1">
    <location>
        <position position="113"/>
    </location>
    <ligand>
        <name>5-amino-6-(D-ribitylamino)uracil</name>
        <dbReference type="ChEBI" id="CHEBI:15934"/>
    </ligand>
</feature>
<feature type="binding site" evidence="1">
    <location>
        <position position="127"/>
    </location>
    <ligand>
        <name>(2S)-2-hydroxy-3-oxobutyl phosphate</name>
        <dbReference type="ChEBI" id="CHEBI:58830"/>
    </ligand>
</feature>
<organism>
    <name type="scientific">Neisseria gonorrhoeae (strain NCCP11945)</name>
    <dbReference type="NCBI Taxonomy" id="521006"/>
    <lineage>
        <taxon>Bacteria</taxon>
        <taxon>Pseudomonadati</taxon>
        <taxon>Pseudomonadota</taxon>
        <taxon>Betaproteobacteria</taxon>
        <taxon>Neisseriales</taxon>
        <taxon>Neisseriaceae</taxon>
        <taxon>Neisseria</taxon>
    </lineage>
</organism>
<evidence type="ECO:0000255" key="1">
    <source>
        <dbReference type="HAMAP-Rule" id="MF_00178"/>
    </source>
</evidence>
<sequence>MNTIAPNLDGKHLRIGIVQARFTNEIGSQMLKVCCRTLQELGVADENITVATVPGALEIPIALMNFASSEKFDALIAIGVVIRGETYHFELVANESGAGIGRVALDYNIPIANAVLTTENDAQAIERIGEKASDAAKVAVECANLVNLLLEEQFEDEE</sequence>
<gene>
    <name evidence="1" type="primary">ribH</name>
    <name type="ordered locus">NGK_0394</name>
</gene>
<keyword id="KW-0686">Riboflavin biosynthesis</keyword>
<keyword id="KW-0808">Transferase</keyword>
<name>RISB_NEIG2</name>
<proteinExistence type="inferred from homology"/>
<reference key="1">
    <citation type="journal article" date="2008" name="J. Bacteriol.">
        <title>Complete genome sequence of Neisseria gonorrhoeae NCCP11945.</title>
        <authorList>
            <person name="Chung G.T."/>
            <person name="Yoo J.S."/>
            <person name="Oh H.B."/>
            <person name="Lee Y.S."/>
            <person name="Cha S.H."/>
            <person name="Kim S.J."/>
            <person name="Yoo C.K."/>
        </authorList>
    </citation>
    <scope>NUCLEOTIDE SEQUENCE [LARGE SCALE GENOMIC DNA]</scope>
    <source>
        <strain>NCCP11945</strain>
    </source>
</reference>
<comment type="function">
    <text evidence="1">Catalyzes the formation of 6,7-dimethyl-8-ribityllumazine by condensation of 5-amino-6-(D-ribitylamino)uracil with 3,4-dihydroxy-2-butanone 4-phosphate. This is the penultimate step in the biosynthesis of riboflavin.</text>
</comment>
<comment type="catalytic activity">
    <reaction evidence="1">
        <text>(2S)-2-hydroxy-3-oxobutyl phosphate + 5-amino-6-(D-ribitylamino)uracil = 6,7-dimethyl-8-(1-D-ribityl)lumazine + phosphate + 2 H2O + H(+)</text>
        <dbReference type="Rhea" id="RHEA:26152"/>
        <dbReference type="ChEBI" id="CHEBI:15377"/>
        <dbReference type="ChEBI" id="CHEBI:15378"/>
        <dbReference type="ChEBI" id="CHEBI:15934"/>
        <dbReference type="ChEBI" id="CHEBI:43474"/>
        <dbReference type="ChEBI" id="CHEBI:58201"/>
        <dbReference type="ChEBI" id="CHEBI:58830"/>
        <dbReference type="EC" id="2.5.1.78"/>
    </reaction>
</comment>
<comment type="pathway">
    <text evidence="1">Cofactor biosynthesis; riboflavin biosynthesis; riboflavin from 2-hydroxy-3-oxobutyl phosphate and 5-amino-6-(D-ribitylamino)uracil: step 1/2.</text>
</comment>
<comment type="similarity">
    <text evidence="1">Belongs to the DMRL synthase family.</text>
</comment>